<comment type="function">
    <text evidence="1">Involved in the biosynthesis of isopentenyl diphosphate (IPP) and dimethylallyl diphosphate (DMAPP), two major building blocks of isoprenoid compounds. Catalyzes the conversion of 4-diphosphocytidyl-2-C-methyl-D-erythritol 2-phosphate (CDP-ME2P) to 2-C-methyl-D-erythritol 2,4-cyclodiphosphate (ME-CPP) with a corresponding release of cytidine 5-monophosphate (CMP).</text>
</comment>
<comment type="catalytic activity">
    <reaction evidence="1">
        <text>4-CDP-2-C-methyl-D-erythritol 2-phosphate = 2-C-methyl-D-erythritol 2,4-cyclic diphosphate + CMP</text>
        <dbReference type="Rhea" id="RHEA:23864"/>
        <dbReference type="ChEBI" id="CHEBI:57919"/>
        <dbReference type="ChEBI" id="CHEBI:58483"/>
        <dbReference type="ChEBI" id="CHEBI:60377"/>
        <dbReference type="EC" id="4.6.1.12"/>
    </reaction>
</comment>
<comment type="cofactor">
    <cofactor evidence="1">
        <name>a divalent metal cation</name>
        <dbReference type="ChEBI" id="CHEBI:60240"/>
    </cofactor>
    <text evidence="1">Binds 1 divalent metal cation per subunit.</text>
</comment>
<comment type="pathway">
    <text evidence="1">Isoprenoid biosynthesis; isopentenyl diphosphate biosynthesis via DXP pathway; isopentenyl diphosphate from 1-deoxy-D-xylulose 5-phosphate: step 4/6.</text>
</comment>
<comment type="subunit">
    <text evidence="1">Homotrimer.</text>
</comment>
<comment type="similarity">
    <text evidence="1">Belongs to the IspF family.</text>
</comment>
<organism>
    <name type="scientific">Shewanella sp. (strain ANA-3)</name>
    <dbReference type="NCBI Taxonomy" id="94122"/>
    <lineage>
        <taxon>Bacteria</taxon>
        <taxon>Pseudomonadati</taxon>
        <taxon>Pseudomonadota</taxon>
        <taxon>Gammaproteobacteria</taxon>
        <taxon>Alteromonadales</taxon>
        <taxon>Shewanellaceae</taxon>
        <taxon>Shewanella</taxon>
    </lineage>
</organism>
<protein>
    <recommendedName>
        <fullName evidence="1">2-C-methyl-D-erythritol 2,4-cyclodiphosphate synthase</fullName>
        <shortName evidence="1">MECDP-synthase</shortName>
        <shortName evidence="1">MECPP-synthase</shortName>
        <shortName evidence="1">MECPS</shortName>
        <ecNumber evidence="1">4.6.1.12</ecNumber>
    </recommendedName>
</protein>
<accession>A0KU85</accession>
<sequence>MKIRIGHGFDVHKFGEARPLILCGVEVPYETGLVAHSDGDVVLHAISDAILGAMALGDIGKHFPDTDAAYKGADSRVLLRHCYALARAKGFELGNLDVTIIAQAPKMAPHIEDMRQVLAADLNADIADINVKATTTEKLGFTGRKEGIAVEAVVLLSRQ</sequence>
<proteinExistence type="inferred from homology"/>
<dbReference type="EC" id="4.6.1.12" evidence="1"/>
<dbReference type="EMBL" id="CP000469">
    <property type="protein sequence ID" value="ABK47354.1"/>
    <property type="molecule type" value="Genomic_DNA"/>
</dbReference>
<dbReference type="RefSeq" id="WP_011621907.1">
    <property type="nucleotide sequence ID" value="NC_008577.1"/>
</dbReference>
<dbReference type="SMR" id="A0KU85"/>
<dbReference type="STRING" id="94122.Shewana3_1119"/>
<dbReference type="GeneID" id="75187809"/>
<dbReference type="KEGG" id="shn:Shewana3_1119"/>
<dbReference type="eggNOG" id="COG0245">
    <property type="taxonomic scope" value="Bacteria"/>
</dbReference>
<dbReference type="HOGENOM" id="CLU_084630_2_0_6"/>
<dbReference type="OrthoDB" id="9804336at2"/>
<dbReference type="UniPathway" id="UPA00056">
    <property type="reaction ID" value="UER00095"/>
</dbReference>
<dbReference type="Proteomes" id="UP000002589">
    <property type="component" value="Chromosome"/>
</dbReference>
<dbReference type="GO" id="GO:0008685">
    <property type="term" value="F:2-C-methyl-D-erythritol 2,4-cyclodiphosphate synthase activity"/>
    <property type="evidence" value="ECO:0007669"/>
    <property type="project" value="UniProtKB-UniRule"/>
</dbReference>
<dbReference type="GO" id="GO:0046872">
    <property type="term" value="F:metal ion binding"/>
    <property type="evidence" value="ECO:0007669"/>
    <property type="project" value="UniProtKB-KW"/>
</dbReference>
<dbReference type="GO" id="GO:0019288">
    <property type="term" value="P:isopentenyl diphosphate biosynthetic process, methylerythritol 4-phosphate pathway"/>
    <property type="evidence" value="ECO:0007669"/>
    <property type="project" value="UniProtKB-UniRule"/>
</dbReference>
<dbReference type="GO" id="GO:0016114">
    <property type="term" value="P:terpenoid biosynthetic process"/>
    <property type="evidence" value="ECO:0007669"/>
    <property type="project" value="InterPro"/>
</dbReference>
<dbReference type="CDD" id="cd00554">
    <property type="entry name" value="MECDP_synthase"/>
    <property type="match status" value="1"/>
</dbReference>
<dbReference type="FunFam" id="3.30.1330.50:FF:000001">
    <property type="entry name" value="2-C-methyl-D-erythritol 2,4-cyclodiphosphate synthase"/>
    <property type="match status" value="1"/>
</dbReference>
<dbReference type="Gene3D" id="3.30.1330.50">
    <property type="entry name" value="2-C-methyl-D-erythritol 2,4-cyclodiphosphate synthase"/>
    <property type="match status" value="1"/>
</dbReference>
<dbReference type="HAMAP" id="MF_00107">
    <property type="entry name" value="IspF"/>
    <property type="match status" value="1"/>
</dbReference>
<dbReference type="InterPro" id="IPR003526">
    <property type="entry name" value="MECDP_synthase"/>
</dbReference>
<dbReference type="InterPro" id="IPR020555">
    <property type="entry name" value="MECDP_synthase_CS"/>
</dbReference>
<dbReference type="InterPro" id="IPR036571">
    <property type="entry name" value="MECDP_synthase_sf"/>
</dbReference>
<dbReference type="NCBIfam" id="TIGR00151">
    <property type="entry name" value="ispF"/>
    <property type="match status" value="1"/>
</dbReference>
<dbReference type="PANTHER" id="PTHR43181">
    <property type="entry name" value="2-C-METHYL-D-ERYTHRITOL 2,4-CYCLODIPHOSPHATE SYNTHASE, CHLOROPLASTIC"/>
    <property type="match status" value="1"/>
</dbReference>
<dbReference type="PANTHER" id="PTHR43181:SF1">
    <property type="entry name" value="2-C-METHYL-D-ERYTHRITOL 2,4-CYCLODIPHOSPHATE SYNTHASE, CHLOROPLASTIC"/>
    <property type="match status" value="1"/>
</dbReference>
<dbReference type="Pfam" id="PF02542">
    <property type="entry name" value="YgbB"/>
    <property type="match status" value="1"/>
</dbReference>
<dbReference type="SUPFAM" id="SSF69765">
    <property type="entry name" value="IpsF-like"/>
    <property type="match status" value="1"/>
</dbReference>
<dbReference type="PROSITE" id="PS01350">
    <property type="entry name" value="ISPF"/>
    <property type="match status" value="1"/>
</dbReference>
<evidence type="ECO:0000255" key="1">
    <source>
        <dbReference type="HAMAP-Rule" id="MF_00107"/>
    </source>
</evidence>
<feature type="chain" id="PRO_1000022882" description="2-C-methyl-D-erythritol 2,4-cyclodiphosphate synthase">
    <location>
        <begin position="1"/>
        <end position="159"/>
    </location>
</feature>
<feature type="binding site" evidence="1">
    <location>
        <begin position="10"/>
        <end position="12"/>
    </location>
    <ligand>
        <name>4-CDP-2-C-methyl-D-erythritol 2-phosphate</name>
        <dbReference type="ChEBI" id="CHEBI:57919"/>
    </ligand>
</feature>
<feature type="binding site" evidence="1">
    <location>
        <position position="10"/>
    </location>
    <ligand>
        <name>a divalent metal cation</name>
        <dbReference type="ChEBI" id="CHEBI:60240"/>
    </ligand>
</feature>
<feature type="binding site" evidence="1">
    <location>
        <position position="12"/>
    </location>
    <ligand>
        <name>a divalent metal cation</name>
        <dbReference type="ChEBI" id="CHEBI:60240"/>
    </ligand>
</feature>
<feature type="binding site" evidence="1">
    <location>
        <begin position="36"/>
        <end position="37"/>
    </location>
    <ligand>
        <name>4-CDP-2-C-methyl-D-erythritol 2-phosphate</name>
        <dbReference type="ChEBI" id="CHEBI:57919"/>
    </ligand>
</feature>
<feature type="binding site" evidence="1">
    <location>
        <position position="44"/>
    </location>
    <ligand>
        <name>a divalent metal cation</name>
        <dbReference type="ChEBI" id="CHEBI:60240"/>
    </ligand>
</feature>
<feature type="binding site" evidence="1">
    <location>
        <begin position="58"/>
        <end position="60"/>
    </location>
    <ligand>
        <name>4-CDP-2-C-methyl-D-erythritol 2-phosphate</name>
        <dbReference type="ChEBI" id="CHEBI:57919"/>
    </ligand>
</feature>
<feature type="binding site" evidence="1">
    <location>
        <begin position="63"/>
        <end position="67"/>
    </location>
    <ligand>
        <name>4-CDP-2-C-methyl-D-erythritol 2-phosphate</name>
        <dbReference type="ChEBI" id="CHEBI:57919"/>
    </ligand>
</feature>
<feature type="binding site" evidence="1">
    <location>
        <begin position="102"/>
        <end position="108"/>
    </location>
    <ligand>
        <name>4-CDP-2-C-methyl-D-erythritol 2-phosphate</name>
        <dbReference type="ChEBI" id="CHEBI:57919"/>
    </ligand>
</feature>
<feature type="binding site" evidence="1">
    <location>
        <begin position="134"/>
        <end position="137"/>
    </location>
    <ligand>
        <name>4-CDP-2-C-methyl-D-erythritol 2-phosphate</name>
        <dbReference type="ChEBI" id="CHEBI:57919"/>
    </ligand>
</feature>
<feature type="binding site" evidence="1">
    <location>
        <position position="141"/>
    </location>
    <ligand>
        <name>4-CDP-2-C-methyl-D-erythritol 2-phosphate</name>
        <dbReference type="ChEBI" id="CHEBI:57919"/>
    </ligand>
</feature>
<feature type="binding site" evidence="1">
    <location>
        <position position="144"/>
    </location>
    <ligand>
        <name>4-CDP-2-C-methyl-D-erythritol 2-phosphate</name>
        <dbReference type="ChEBI" id="CHEBI:57919"/>
    </ligand>
</feature>
<feature type="site" description="Transition state stabilizer" evidence="1">
    <location>
        <position position="36"/>
    </location>
</feature>
<feature type="site" description="Transition state stabilizer" evidence="1">
    <location>
        <position position="135"/>
    </location>
</feature>
<name>ISPF_SHESA</name>
<gene>
    <name evidence="1" type="primary">ispF</name>
    <name type="ordered locus">Shewana3_1119</name>
</gene>
<reference key="1">
    <citation type="submission" date="2006-09" db="EMBL/GenBank/DDBJ databases">
        <title>Complete sequence of chromosome 1 of Shewanella sp. ANA-3.</title>
        <authorList>
            <person name="Copeland A."/>
            <person name="Lucas S."/>
            <person name="Lapidus A."/>
            <person name="Barry K."/>
            <person name="Detter J.C."/>
            <person name="Glavina del Rio T."/>
            <person name="Hammon N."/>
            <person name="Israni S."/>
            <person name="Dalin E."/>
            <person name="Tice H."/>
            <person name="Pitluck S."/>
            <person name="Chertkov O."/>
            <person name="Brettin T."/>
            <person name="Bruce D."/>
            <person name="Han C."/>
            <person name="Tapia R."/>
            <person name="Gilna P."/>
            <person name="Schmutz J."/>
            <person name="Larimer F."/>
            <person name="Land M."/>
            <person name="Hauser L."/>
            <person name="Kyrpides N."/>
            <person name="Kim E."/>
            <person name="Newman D."/>
            <person name="Salticov C."/>
            <person name="Konstantinidis K."/>
            <person name="Klappenback J."/>
            <person name="Tiedje J."/>
            <person name="Richardson P."/>
        </authorList>
    </citation>
    <scope>NUCLEOTIDE SEQUENCE [LARGE SCALE GENOMIC DNA]</scope>
    <source>
        <strain>ANA-3</strain>
    </source>
</reference>
<keyword id="KW-0414">Isoprene biosynthesis</keyword>
<keyword id="KW-0456">Lyase</keyword>
<keyword id="KW-0479">Metal-binding</keyword>